<name>KLHL7_HUMAN</name>
<evidence type="ECO:0000255" key="1">
    <source>
        <dbReference type="PROSITE-ProRule" id="PRU00037"/>
    </source>
</evidence>
<evidence type="ECO:0000269" key="2">
    <source>
    </source>
</evidence>
<evidence type="ECO:0000269" key="3">
    <source>
    </source>
</evidence>
<evidence type="ECO:0000269" key="4">
    <source>
    </source>
</evidence>
<evidence type="ECO:0000269" key="5">
    <source>
    </source>
</evidence>
<evidence type="ECO:0000269" key="6">
    <source>
    </source>
</evidence>
<evidence type="ECO:0000269" key="7">
    <source>
    </source>
</evidence>
<evidence type="ECO:0000303" key="8">
    <source>
    </source>
</evidence>
<evidence type="ECO:0000303" key="9">
    <source>
    </source>
</evidence>
<evidence type="ECO:0000303" key="10">
    <source>
    </source>
</evidence>
<evidence type="ECO:0000303" key="11">
    <source ref="1"/>
</evidence>
<evidence type="ECO:0000305" key="12"/>
<evidence type="ECO:0007829" key="13">
    <source>
        <dbReference type="PDB" id="3II7"/>
    </source>
</evidence>
<organism>
    <name type="scientific">Homo sapiens</name>
    <name type="common">Human</name>
    <dbReference type="NCBI Taxonomy" id="9606"/>
    <lineage>
        <taxon>Eukaryota</taxon>
        <taxon>Metazoa</taxon>
        <taxon>Chordata</taxon>
        <taxon>Craniata</taxon>
        <taxon>Vertebrata</taxon>
        <taxon>Euteleostomi</taxon>
        <taxon>Mammalia</taxon>
        <taxon>Eutheria</taxon>
        <taxon>Euarchontoglires</taxon>
        <taxon>Primates</taxon>
        <taxon>Haplorrhini</taxon>
        <taxon>Catarrhini</taxon>
        <taxon>Hominidae</taxon>
        <taxon>Homo</taxon>
    </lineage>
</organism>
<feature type="chain" id="PRO_0000228988" description="Kelch-like protein 7">
    <location>
        <begin position="1"/>
        <end position="586"/>
    </location>
</feature>
<feature type="domain" description="BTB" evidence="1">
    <location>
        <begin position="44"/>
        <end position="111"/>
    </location>
</feature>
<feature type="domain" description="BACK">
    <location>
        <begin position="146"/>
        <end position="248"/>
    </location>
</feature>
<feature type="repeat" description="Kelch 1">
    <location>
        <begin position="294"/>
        <end position="336"/>
    </location>
</feature>
<feature type="repeat" description="Kelch 2">
    <location>
        <begin position="337"/>
        <end position="382"/>
    </location>
</feature>
<feature type="repeat" description="Kelch 3">
    <location>
        <begin position="383"/>
        <end position="430"/>
    </location>
</feature>
<feature type="repeat" description="Kelch 4">
    <location>
        <begin position="431"/>
        <end position="481"/>
    </location>
</feature>
<feature type="repeat" description="Kelch 5">
    <location>
        <begin position="483"/>
        <end position="528"/>
    </location>
</feature>
<feature type="repeat" description="Kelch 6">
    <location>
        <begin position="530"/>
        <end position="575"/>
    </location>
</feature>
<feature type="splice variant" id="VSP_046974" description="In isoform 5." evidence="8">
    <location>
        <begin position="1"/>
        <end position="48"/>
    </location>
</feature>
<feature type="splice variant" id="VSP_038416" description="In isoform 2 and isoform 4." evidence="8 9 10">
    <original>MAASGVEKSSKKKTEKKLAAREEAKLLAGFMGVMNNMRKQ</original>
    <variation>MLGGTDCRTFLTSHINLK</variation>
    <location>
        <begin position="1"/>
        <end position="40"/>
    </location>
</feature>
<feature type="splice variant" id="VSP_038417" description="In isoform 3 and isoform 4." evidence="9 11">
    <original>ISVLAECLDCPELKATAD</original>
    <variation>EAEKVDQSLPECGMLFTV</variation>
    <location>
        <begin position="149"/>
        <end position="166"/>
    </location>
</feature>
<feature type="splice variant" id="VSP_038418" description="In isoform 3 and isoform 4." evidence="9 11">
    <location>
        <begin position="167"/>
        <end position="586"/>
    </location>
</feature>
<feature type="sequence variant" id="VAR_060672" description="In RP42; dbSNP:rs137853112." evidence="3 6">
    <original>S</original>
    <variation>N</variation>
    <location>
        <position position="150"/>
    </location>
</feature>
<feature type="sequence variant" id="VAR_060673" description="In RP42; impairs interaction with CUL3 and ubiquitin ligase activity of the BCR(KLHL7) complex; dbSNP:rs137853114." evidence="3 5 6">
    <original>A</original>
    <variation>T</variation>
    <location>
        <position position="153"/>
    </location>
</feature>
<feature type="sequence variant" id="VAR_060674" description="In RP42; impairs interaction with CUL3 and ubiquitin ligase activity of the BCR(KLHL7) complex; dbSNP:rs137853113." evidence="3 4 5 6">
    <original>A</original>
    <variation>V</variation>
    <location>
        <position position="153"/>
    </location>
</feature>
<feature type="sequence variant" id="VAR_060675" description="In a patient with retinitis pigmentosa; uncertain significance; dbSNP:rs1227070758." evidence="3">
    <original>D</original>
    <variation>N</variation>
    <location>
        <position position="255"/>
    </location>
</feature>
<feature type="sequence variant" id="VAR_077161" description="In PERCHING; subcellular localization in punctate structures at the perinuclear region of cytoplasm is similar to wild-type and colocalized with CUL3; dbSNP:rs879255558." evidence="7">
    <original>R</original>
    <variation>Q</variation>
    <location>
        <position position="372"/>
    </location>
</feature>
<feature type="sequence variant" id="VAR_077162" description="In PERCHING; subcellular localization in punctate structures at the perinuclear region of cytoplasm is similar to wild-type and colocalized with CUL3; dbSNP:rs780705654." evidence="7">
    <original>R</original>
    <variation>C</variation>
    <location>
        <position position="420"/>
    </location>
</feature>
<feature type="sequence variant" id="VAR_077163" description="In PERCHING; subcellular localization in punctate structures at the perinuclear region of cytoplasm is similar to wild-type and colocalized with CUL3; dbSNP:rs879255556." evidence="7">
    <original>C</original>
    <variation>S</variation>
    <location>
        <position position="421"/>
    </location>
</feature>
<feature type="sequence variant" id="VAR_060676" evidence="3">
    <original>H</original>
    <variation>Y</variation>
    <location>
        <position position="423"/>
    </location>
</feature>
<feature type="sequence variant" id="VAR_060677" description="In a patient with retinitis pigmentosa; uncertain significance." evidence="3">
    <original>K</original>
    <variation>Q</variation>
    <location>
        <position position="472"/>
    </location>
</feature>
<feature type="sequence conflict" description="In Ref. 8; AAH39585." evidence="12" ref="8">
    <original>V</original>
    <variation>L</variation>
    <location>
        <position position="85"/>
    </location>
</feature>
<feature type="sequence conflict" description="In Ref. 3; BAB71175." evidence="12" ref="3">
    <original>K</original>
    <variation>R</variation>
    <location>
        <position position="138"/>
    </location>
</feature>
<feature type="sequence conflict" description="In Ref. 3; BAH12925." evidence="12" ref="3">
    <original>E</original>
    <variation>D</variation>
    <location>
        <position position="507"/>
    </location>
</feature>
<feature type="strand" evidence="13">
    <location>
        <begin position="293"/>
        <end position="298"/>
    </location>
</feature>
<feature type="strand" evidence="13">
    <location>
        <begin position="305"/>
        <end position="309"/>
    </location>
</feature>
<feature type="turn" evidence="13">
    <location>
        <begin position="311"/>
        <end position="313"/>
    </location>
</feature>
<feature type="strand" evidence="13">
    <location>
        <begin position="316"/>
        <end position="318"/>
    </location>
</feature>
<feature type="strand" evidence="13">
    <location>
        <begin position="330"/>
        <end position="334"/>
    </location>
</feature>
<feature type="strand" evidence="13">
    <location>
        <begin position="337"/>
        <end position="341"/>
    </location>
</feature>
<feature type="strand" evidence="13">
    <location>
        <begin position="344"/>
        <end position="348"/>
    </location>
</feature>
<feature type="strand" evidence="13">
    <location>
        <begin position="351"/>
        <end position="356"/>
    </location>
</feature>
<feature type="turn" evidence="13">
    <location>
        <begin position="357"/>
        <end position="360"/>
    </location>
</feature>
<feature type="strand" evidence="13">
    <location>
        <begin position="361"/>
        <end position="366"/>
    </location>
</feature>
<feature type="strand" evidence="13">
    <location>
        <begin position="376"/>
        <end position="380"/>
    </location>
</feature>
<feature type="strand" evidence="13">
    <location>
        <begin position="383"/>
        <end position="387"/>
    </location>
</feature>
<feature type="strand" evidence="13">
    <location>
        <begin position="400"/>
        <end position="404"/>
    </location>
</feature>
<feature type="turn" evidence="13">
    <location>
        <begin position="405"/>
        <end position="408"/>
    </location>
</feature>
<feature type="strand" evidence="13">
    <location>
        <begin position="409"/>
        <end position="413"/>
    </location>
</feature>
<feature type="strand" evidence="13">
    <location>
        <begin position="424"/>
        <end position="428"/>
    </location>
</feature>
<feature type="strand" evidence="13">
    <location>
        <begin position="431"/>
        <end position="435"/>
    </location>
</feature>
<feature type="strand" evidence="13">
    <location>
        <begin position="438"/>
        <end position="440"/>
    </location>
</feature>
<feature type="turn" evidence="13">
    <location>
        <begin position="442"/>
        <end position="444"/>
    </location>
</feature>
<feature type="strand" evidence="13">
    <location>
        <begin position="451"/>
        <end position="455"/>
    </location>
</feature>
<feature type="turn" evidence="13">
    <location>
        <begin position="456"/>
        <end position="459"/>
    </location>
</feature>
<feature type="strand" evidence="13">
    <location>
        <begin position="460"/>
        <end position="464"/>
    </location>
</feature>
<feature type="strand" evidence="13">
    <location>
        <begin position="475"/>
        <end position="479"/>
    </location>
</feature>
<feature type="strand" evidence="13">
    <location>
        <begin position="482"/>
        <end position="486"/>
    </location>
</feature>
<feature type="strand" evidence="13">
    <location>
        <begin position="493"/>
        <end position="495"/>
    </location>
</feature>
<feature type="strand" evidence="13">
    <location>
        <begin position="498"/>
        <end position="502"/>
    </location>
</feature>
<feature type="turn" evidence="13">
    <location>
        <begin position="503"/>
        <end position="506"/>
    </location>
</feature>
<feature type="strand" evidence="13">
    <location>
        <begin position="507"/>
        <end position="510"/>
    </location>
</feature>
<feature type="strand" evidence="13">
    <location>
        <begin position="522"/>
        <end position="526"/>
    </location>
</feature>
<feature type="strand" evidence="13">
    <location>
        <begin position="529"/>
        <end position="534"/>
    </location>
</feature>
<feature type="strand" evidence="13">
    <location>
        <begin position="538"/>
        <end position="541"/>
    </location>
</feature>
<feature type="strand" evidence="13">
    <location>
        <begin position="544"/>
        <end position="549"/>
    </location>
</feature>
<feature type="turn" evidence="13">
    <location>
        <begin position="550"/>
        <end position="553"/>
    </location>
</feature>
<feature type="strand" evidence="13">
    <location>
        <begin position="554"/>
        <end position="562"/>
    </location>
</feature>
<feature type="strand" evidence="13">
    <location>
        <begin position="570"/>
        <end position="575"/>
    </location>
</feature>
<feature type="sequence variant" id="VAR_082842" description="In dbSNP:rs17147682." evidence="12">
    <original>K</original>
    <variation>R</variation>
    <location sequence="Q8IXQ5-2">
        <position position="18"/>
    </location>
</feature>
<proteinExistence type="evidence at protein level"/>
<comment type="function">
    <text evidence="5">Substrate-specific adapter of a BCR (BTB-CUL3-RBX1) E3 ubiquitin ligase complex. The BCR(KLHL7) complex acts by mediating ubiquitination and subsequent degradation of substrate proteins. Probably mediates 'Lys-48'-linked ubiquitination.</text>
</comment>
<comment type="pathway">
    <text>Protein modification; protein ubiquitination.</text>
</comment>
<comment type="subunit">
    <text evidence="5">Homodimer. Component of the BCR(KLHL7) E3 ubiquitin ligase complex, at least composed of CUL3 and KLHL7 and RBX1.</text>
</comment>
<comment type="interaction">
    <interactant intactId="EBI-6153160">
        <id>Q8IXQ5</id>
    </interactant>
    <interactant intactId="EBI-456129">
        <id>Q13618</id>
        <label>CUL3</label>
    </interactant>
    <organismsDiffer>false</organismsDiffer>
    <experiments>13</experiments>
</comment>
<comment type="interaction">
    <interactant intactId="EBI-6153160">
        <id>Q8IXQ5</id>
    </interactant>
    <interactant intactId="EBI-6153160">
        <id>Q8IXQ5</id>
        <label>KLHL7</label>
    </interactant>
    <organismsDiffer>false</organismsDiffer>
    <experiments>7</experiments>
</comment>
<comment type="interaction">
    <interactant intactId="EBI-25895859">
        <id>Q8IXQ5-4</id>
    </interactant>
    <interactant intactId="EBI-12157263">
        <id>P40337-2</id>
        <label>VHL</label>
    </interactant>
    <organismsDiffer>false</organismsDiffer>
    <experiments>3</experiments>
</comment>
<comment type="subcellular location">
    <subcellularLocation>
        <location evidence="2">Nucleus</location>
    </subcellularLocation>
    <subcellularLocation>
        <location evidence="7">Cytoplasm</location>
    </subcellularLocation>
    <text evidence="7">Colocalizes with CUL3 in punctate structures at the perinuclear region of the cytoplasm.</text>
</comment>
<comment type="alternative products">
    <event type="alternative splicing"/>
    <isoform>
        <id>Q8IXQ5-1</id>
        <name>1</name>
        <sequence type="displayed"/>
    </isoform>
    <isoform>
        <id>Q8IXQ5-2</id>
        <name>2</name>
        <sequence type="described" ref="VSP_038416"/>
    </isoform>
    <isoform>
        <id>Q8IXQ5-3</id>
        <name>3</name>
        <sequence type="described" ref="VSP_038417 VSP_038418"/>
    </isoform>
    <isoform>
        <id>Q8IXQ5-4</id>
        <name>4</name>
        <sequence type="described" ref="VSP_038416 VSP_038417 VSP_038418"/>
    </isoform>
    <isoform>
        <id>Q8IXQ5-5</id>
        <name>5</name>
        <sequence type="described" ref="VSP_046974"/>
    </isoform>
</comment>
<comment type="tissue specificity">
    <text evidence="2">Widely expressed, with highest levels in adult and fetal heart, CNS and adult testis.</text>
</comment>
<comment type="disease" evidence="7">
    <disease id="DI-04779">
        <name>Perching syndrome</name>
        <acronym>PERCHING</acronym>
        <description>An autosomal recessive multisystem disorder characterized by global developmental delay, dysmorphic facial features, feeding and respiratory difficulties with poor overall growth, axial hypotonia, and joint contractures. The features are variable, even within families, and may also include retinitis pigmentosa, cardiac or genitourinary anomalies, and abnormal sweating.</description>
        <dbReference type="MIM" id="617055"/>
    </disease>
    <text>The disease is caused by variants affecting the gene represented in this entry.</text>
</comment>
<comment type="disease" evidence="3 4 5 6">
    <disease id="DI-02473">
        <name>Retinitis pigmentosa 42</name>
        <acronym>RP42</acronym>
        <description>A retinal dystrophy belonging to the group of pigmentary retinopathies. Retinitis pigmentosa is characterized by retinal pigment deposits visible on fundus examination and primary loss of rod photoreceptor cells followed by secondary loss of cone photoreceptors. Patients typically have night vision blindness and loss of midperipheral visual field. As their condition progresses, they lose their far peripheral visual field and eventually central vision as well.</description>
        <dbReference type="MIM" id="612943"/>
    </disease>
    <text>The disease is caused by variants affecting the gene represented in this entry.</text>
</comment>
<reference key="1">
    <citation type="submission" date="1998-12" db="EMBL/GenBank/DDBJ databases">
        <authorList>
            <person name="Zhang W."/>
            <person name="He L."/>
            <person name="Wan T."/>
            <person name="Zhu X."/>
            <person name="Cao X."/>
        </authorList>
    </citation>
    <scope>NUCLEOTIDE SEQUENCE [MRNA] (ISOFORM 3)</scope>
</reference>
<reference key="2">
    <citation type="journal article" date="2001" name="Genome Res.">
        <title>Towards a catalog of human genes and proteins: sequencing and analysis of 500 novel complete protein coding human cDNAs.</title>
        <authorList>
            <person name="Wiemann S."/>
            <person name="Weil B."/>
            <person name="Wellenreuther R."/>
            <person name="Gassenhuber J."/>
            <person name="Glassl S."/>
            <person name="Ansorge W."/>
            <person name="Boecher M."/>
            <person name="Bloecker H."/>
            <person name="Bauersachs S."/>
            <person name="Blum H."/>
            <person name="Lauber J."/>
            <person name="Duesterhoeft A."/>
            <person name="Beyer A."/>
            <person name="Koehrer K."/>
            <person name="Strack N."/>
            <person name="Mewes H.-W."/>
            <person name="Ottenwaelder B."/>
            <person name="Obermaier B."/>
            <person name="Tampe J."/>
            <person name="Heubner D."/>
            <person name="Wambutt R."/>
            <person name="Korn B."/>
            <person name="Klein M."/>
            <person name="Poustka A."/>
        </authorList>
    </citation>
    <scope>NUCLEOTIDE SEQUENCE [LARGE SCALE MRNA] (ISOFORM 1)</scope>
    <source>
        <tissue>Brain</tissue>
    </source>
</reference>
<reference key="3">
    <citation type="journal article" date="2004" name="Nat. Genet.">
        <title>Complete sequencing and characterization of 21,243 full-length human cDNAs.</title>
        <authorList>
            <person name="Ota T."/>
            <person name="Suzuki Y."/>
            <person name="Nishikawa T."/>
            <person name="Otsuki T."/>
            <person name="Sugiyama T."/>
            <person name="Irie R."/>
            <person name="Wakamatsu A."/>
            <person name="Hayashi K."/>
            <person name="Sato H."/>
            <person name="Nagai K."/>
            <person name="Kimura K."/>
            <person name="Makita H."/>
            <person name="Sekine M."/>
            <person name="Obayashi M."/>
            <person name="Nishi T."/>
            <person name="Shibahara T."/>
            <person name="Tanaka T."/>
            <person name="Ishii S."/>
            <person name="Yamamoto J."/>
            <person name="Saito K."/>
            <person name="Kawai Y."/>
            <person name="Isono Y."/>
            <person name="Nakamura Y."/>
            <person name="Nagahari K."/>
            <person name="Murakami K."/>
            <person name="Yasuda T."/>
            <person name="Iwayanagi T."/>
            <person name="Wagatsuma M."/>
            <person name="Shiratori A."/>
            <person name="Sudo H."/>
            <person name="Hosoiri T."/>
            <person name="Kaku Y."/>
            <person name="Kodaira H."/>
            <person name="Kondo H."/>
            <person name="Sugawara M."/>
            <person name="Takahashi M."/>
            <person name="Kanda K."/>
            <person name="Yokoi T."/>
            <person name="Furuya T."/>
            <person name="Kikkawa E."/>
            <person name="Omura Y."/>
            <person name="Abe K."/>
            <person name="Kamihara K."/>
            <person name="Katsuta N."/>
            <person name="Sato K."/>
            <person name="Tanikawa M."/>
            <person name="Yamazaki M."/>
            <person name="Ninomiya K."/>
            <person name="Ishibashi T."/>
            <person name="Yamashita H."/>
            <person name="Murakawa K."/>
            <person name="Fujimori K."/>
            <person name="Tanai H."/>
            <person name="Kimata M."/>
            <person name="Watanabe M."/>
            <person name="Hiraoka S."/>
            <person name="Chiba Y."/>
            <person name="Ishida S."/>
            <person name="Ono Y."/>
            <person name="Takiguchi S."/>
            <person name="Watanabe S."/>
            <person name="Yosida M."/>
            <person name="Hotuta T."/>
            <person name="Kusano J."/>
            <person name="Kanehori K."/>
            <person name="Takahashi-Fujii A."/>
            <person name="Hara H."/>
            <person name="Tanase T.-O."/>
            <person name="Nomura Y."/>
            <person name="Togiya S."/>
            <person name="Komai F."/>
            <person name="Hara R."/>
            <person name="Takeuchi K."/>
            <person name="Arita M."/>
            <person name="Imose N."/>
            <person name="Musashino K."/>
            <person name="Yuuki H."/>
            <person name="Oshima A."/>
            <person name="Sasaki N."/>
            <person name="Aotsuka S."/>
            <person name="Yoshikawa Y."/>
            <person name="Matsunawa H."/>
            <person name="Ichihara T."/>
            <person name="Shiohata N."/>
            <person name="Sano S."/>
            <person name="Moriya S."/>
            <person name="Momiyama H."/>
            <person name="Satoh N."/>
            <person name="Takami S."/>
            <person name="Terashima Y."/>
            <person name="Suzuki O."/>
            <person name="Nakagawa S."/>
            <person name="Senoh A."/>
            <person name="Mizoguchi H."/>
            <person name="Goto Y."/>
            <person name="Shimizu F."/>
            <person name="Wakebe H."/>
            <person name="Hishigaki H."/>
            <person name="Watanabe T."/>
            <person name="Sugiyama A."/>
            <person name="Takemoto M."/>
            <person name="Kawakami B."/>
            <person name="Yamazaki M."/>
            <person name="Watanabe K."/>
            <person name="Kumagai A."/>
            <person name="Itakura S."/>
            <person name="Fukuzumi Y."/>
            <person name="Fujimori Y."/>
            <person name="Komiyama M."/>
            <person name="Tashiro H."/>
            <person name="Tanigami A."/>
            <person name="Fujiwara T."/>
            <person name="Ono T."/>
            <person name="Yamada K."/>
            <person name="Fujii Y."/>
            <person name="Ozaki K."/>
            <person name="Hirao M."/>
            <person name="Ohmori Y."/>
            <person name="Kawabata A."/>
            <person name="Hikiji T."/>
            <person name="Kobatake N."/>
            <person name="Inagaki H."/>
            <person name="Ikema Y."/>
            <person name="Okamoto S."/>
            <person name="Okitani R."/>
            <person name="Kawakami T."/>
            <person name="Noguchi S."/>
            <person name="Itoh T."/>
            <person name="Shigeta K."/>
            <person name="Senba T."/>
            <person name="Matsumura K."/>
            <person name="Nakajima Y."/>
            <person name="Mizuno T."/>
            <person name="Morinaga M."/>
            <person name="Sasaki M."/>
            <person name="Togashi T."/>
            <person name="Oyama M."/>
            <person name="Hata H."/>
            <person name="Watanabe M."/>
            <person name="Komatsu T."/>
            <person name="Mizushima-Sugano J."/>
            <person name="Satoh T."/>
            <person name="Shirai Y."/>
            <person name="Takahashi Y."/>
            <person name="Nakagawa K."/>
            <person name="Okumura K."/>
            <person name="Nagase T."/>
            <person name="Nomura N."/>
            <person name="Kikuchi H."/>
            <person name="Masuho Y."/>
            <person name="Yamashita R."/>
            <person name="Nakai K."/>
            <person name="Yada T."/>
            <person name="Nakamura Y."/>
            <person name="Ohara O."/>
            <person name="Isogai T."/>
            <person name="Sugano S."/>
        </authorList>
    </citation>
    <scope>NUCLEOTIDE SEQUENCE [LARGE SCALE MRNA] (ISOFORMS 2 AND 5)</scope>
</reference>
<reference key="4">
    <citation type="journal article" date="2007" name="BMC Genomics">
        <title>The full-ORF clone resource of the German cDNA consortium.</title>
        <authorList>
            <person name="Bechtel S."/>
            <person name="Rosenfelder H."/>
            <person name="Duda A."/>
            <person name="Schmidt C.P."/>
            <person name="Ernst U."/>
            <person name="Wellenreuther R."/>
            <person name="Mehrle A."/>
            <person name="Schuster C."/>
            <person name="Bahr A."/>
            <person name="Bloecker H."/>
            <person name="Heubner D."/>
            <person name="Hoerlein A."/>
            <person name="Michel G."/>
            <person name="Wedler H."/>
            <person name="Koehrer K."/>
            <person name="Ottenwaelder B."/>
            <person name="Poustka A."/>
            <person name="Wiemann S."/>
            <person name="Schupp I."/>
        </authorList>
    </citation>
    <scope>NUCLEOTIDE SEQUENCE [LARGE SCALE MRNA] (ISOFORM 2)</scope>
    <source>
        <tissue>Testis</tissue>
    </source>
</reference>
<reference key="5">
    <citation type="journal article" date="2003" name="Nature">
        <title>The DNA sequence of human chromosome 7.</title>
        <authorList>
            <person name="Hillier L.W."/>
            <person name="Fulton R.S."/>
            <person name="Fulton L.A."/>
            <person name="Graves T.A."/>
            <person name="Pepin K.H."/>
            <person name="Wagner-McPherson C."/>
            <person name="Layman D."/>
            <person name="Maas J."/>
            <person name="Jaeger S."/>
            <person name="Walker R."/>
            <person name="Wylie K."/>
            <person name="Sekhon M."/>
            <person name="Becker M.C."/>
            <person name="O'Laughlin M.D."/>
            <person name="Schaller M.E."/>
            <person name="Fewell G.A."/>
            <person name="Delehaunty K.D."/>
            <person name="Miner T.L."/>
            <person name="Nash W.E."/>
            <person name="Cordes M."/>
            <person name="Du H."/>
            <person name="Sun H."/>
            <person name="Edwards J."/>
            <person name="Bradshaw-Cordum H."/>
            <person name="Ali J."/>
            <person name="Andrews S."/>
            <person name="Isak A."/>
            <person name="Vanbrunt A."/>
            <person name="Nguyen C."/>
            <person name="Du F."/>
            <person name="Lamar B."/>
            <person name="Courtney L."/>
            <person name="Kalicki J."/>
            <person name="Ozersky P."/>
            <person name="Bielicki L."/>
            <person name="Scott K."/>
            <person name="Holmes A."/>
            <person name="Harkins R."/>
            <person name="Harris A."/>
            <person name="Strong C.M."/>
            <person name="Hou S."/>
            <person name="Tomlinson C."/>
            <person name="Dauphin-Kohlberg S."/>
            <person name="Kozlowicz-Reilly A."/>
            <person name="Leonard S."/>
            <person name="Rohlfing T."/>
            <person name="Rock S.M."/>
            <person name="Tin-Wollam A.-M."/>
            <person name="Abbott A."/>
            <person name="Minx P."/>
            <person name="Maupin R."/>
            <person name="Strowmatt C."/>
            <person name="Latreille P."/>
            <person name="Miller N."/>
            <person name="Johnson D."/>
            <person name="Murray J."/>
            <person name="Woessner J.P."/>
            <person name="Wendl M.C."/>
            <person name="Yang S.-P."/>
            <person name="Schultz B.R."/>
            <person name="Wallis J.W."/>
            <person name="Spieth J."/>
            <person name="Bieri T.A."/>
            <person name="Nelson J.O."/>
            <person name="Berkowicz N."/>
            <person name="Wohldmann P.E."/>
            <person name="Cook L.L."/>
            <person name="Hickenbotham M.T."/>
            <person name="Eldred J."/>
            <person name="Williams D."/>
            <person name="Bedell J.A."/>
            <person name="Mardis E.R."/>
            <person name="Clifton S.W."/>
            <person name="Chissoe S.L."/>
            <person name="Marra M.A."/>
            <person name="Raymond C."/>
            <person name="Haugen E."/>
            <person name="Gillett W."/>
            <person name="Zhou Y."/>
            <person name="James R."/>
            <person name="Phelps K."/>
            <person name="Iadanoto S."/>
            <person name="Bubb K."/>
            <person name="Simms E."/>
            <person name="Levy R."/>
            <person name="Clendenning J."/>
            <person name="Kaul R."/>
            <person name="Kent W.J."/>
            <person name="Furey T.S."/>
            <person name="Baertsch R.A."/>
            <person name="Brent M.R."/>
            <person name="Keibler E."/>
            <person name="Flicek P."/>
            <person name="Bork P."/>
            <person name="Suyama M."/>
            <person name="Bailey J.A."/>
            <person name="Portnoy M.E."/>
            <person name="Torrents D."/>
            <person name="Chinwalla A.T."/>
            <person name="Gish W.R."/>
            <person name="Eddy S.R."/>
            <person name="McPherson J.D."/>
            <person name="Olson M.V."/>
            <person name="Eichler E.E."/>
            <person name="Green E.D."/>
            <person name="Waterston R.H."/>
            <person name="Wilson R.K."/>
        </authorList>
    </citation>
    <scope>NUCLEOTIDE SEQUENCE [LARGE SCALE GENOMIC DNA]</scope>
</reference>
<reference key="6">
    <citation type="journal article" date="2003" name="Science">
        <title>Human chromosome 7: DNA sequence and biology.</title>
        <authorList>
            <person name="Scherer S.W."/>
            <person name="Cheung J."/>
            <person name="MacDonald J.R."/>
            <person name="Osborne L.R."/>
            <person name="Nakabayashi K."/>
            <person name="Herbrick J.-A."/>
            <person name="Carson A.R."/>
            <person name="Parker-Katiraee L."/>
            <person name="Skaug J."/>
            <person name="Khaja R."/>
            <person name="Zhang J."/>
            <person name="Hudek A.K."/>
            <person name="Li M."/>
            <person name="Haddad M."/>
            <person name="Duggan G.E."/>
            <person name="Fernandez B.A."/>
            <person name="Kanematsu E."/>
            <person name="Gentles S."/>
            <person name="Christopoulos C.C."/>
            <person name="Choufani S."/>
            <person name="Kwasnicka D."/>
            <person name="Zheng X.H."/>
            <person name="Lai Z."/>
            <person name="Nusskern D.R."/>
            <person name="Zhang Q."/>
            <person name="Gu Z."/>
            <person name="Lu F."/>
            <person name="Zeesman S."/>
            <person name="Nowaczyk M.J."/>
            <person name="Teshima I."/>
            <person name="Chitayat D."/>
            <person name="Shuman C."/>
            <person name="Weksberg R."/>
            <person name="Zackai E.H."/>
            <person name="Grebe T.A."/>
            <person name="Cox S.R."/>
            <person name="Kirkpatrick S.J."/>
            <person name="Rahman N."/>
            <person name="Friedman J.M."/>
            <person name="Heng H.H.Q."/>
            <person name="Pelicci P.G."/>
            <person name="Lo-Coco F."/>
            <person name="Belloni E."/>
            <person name="Shaffer L.G."/>
            <person name="Pober B."/>
            <person name="Morton C.C."/>
            <person name="Gusella J.F."/>
            <person name="Bruns G.A.P."/>
            <person name="Korf B.R."/>
            <person name="Quade B.J."/>
            <person name="Ligon A.H."/>
            <person name="Ferguson H."/>
            <person name="Higgins A.W."/>
            <person name="Leach N.T."/>
            <person name="Herrick S.R."/>
            <person name="Lemyre E."/>
            <person name="Farra C.G."/>
            <person name="Kim H.-G."/>
            <person name="Summers A.M."/>
            <person name="Gripp K.W."/>
            <person name="Roberts W."/>
            <person name="Szatmari P."/>
            <person name="Winsor E.J.T."/>
            <person name="Grzeschik K.-H."/>
            <person name="Teebi A."/>
            <person name="Minassian B.A."/>
            <person name="Kere J."/>
            <person name="Armengol L."/>
            <person name="Pujana M.A."/>
            <person name="Estivill X."/>
            <person name="Wilson M.D."/>
            <person name="Koop B.F."/>
            <person name="Tosi S."/>
            <person name="Moore G.E."/>
            <person name="Boright A.P."/>
            <person name="Zlotorynski E."/>
            <person name="Kerem B."/>
            <person name="Kroisel P.M."/>
            <person name="Petek E."/>
            <person name="Oscier D.G."/>
            <person name="Mould S.J."/>
            <person name="Doehner H."/>
            <person name="Doehner K."/>
            <person name="Rommens J.M."/>
            <person name="Vincent J.B."/>
            <person name="Venter J.C."/>
            <person name="Li P.W."/>
            <person name="Mural R.J."/>
            <person name="Adams M.D."/>
            <person name="Tsui L.-C."/>
        </authorList>
    </citation>
    <scope>NUCLEOTIDE SEQUENCE [LARGE SCALE GENOMIC DNA]</scope>
</reference>
<reference key="7">
    <citation type="submission" date="2005-07" db="EMBL/GenBank/DDBJ databases">
        <authorList>
            <person name="Mural R.J."/>
            <person name="Istrail S."/>
            <person name="Sutton G.G."/>
            <person name="Florea L."/>
            <person name="Halpern A.L."/>
            <person name="Mobarry C.M."/>
            <person name="Lippert R."/>
            <person name="Walenz B."/>
            <person name="Shatkay H."/>
            <person name="Dew I."/>
            <person name="Miller J.R."/>
            <person name="Flanigan M.J."/>
            <person name="Edwards N.J."/>
            <person name="Bolanos R."/>
            <person name="Fasulo D."/>
            <person name="Halldorsson B.V."/>
            <person name="Hannenhalli S."/>
            <person name="Turner R."/>
            <person name="Yooseph S."/>
            <person name="Lu F."/>
            <person name="Nusskern D.R."/>
            <person name="Shue B.C."/>
            <person name="Zheng X.H."/>
            <person name="Zhong F."/>
            <person name="Delcher A.L."/>
            <person name="Huson D.H."/>
            <person name="Kravitz S.A."/>
            <person name="Mouchard L."/>
            <person name="Reinert K."/>
            <person name="Remington K.A."/>
            <person name="Clark A.G."/>
            <person name="Waterman M.S."/>
            <person name="Eichler E.E."/>
            <person name="Adams M.D."/>
            <person name="Hunkapiller M.W."/>
            <person name="Myers E.W."/>
            <person name="Venter J.C."/>
        </authorList>
    </citation>
    <scope>NUCLEOTIDE SEQUENCE [LARGE SCALE GENOMIC DNA]</scope>
</reference>
<reference key="8">
    <citation type="journal article" date="2004" name="Genome Res.">
        <title>The status, quality, and expansion of the NIH full-length cDNA project: the Mammalian Gene Collection (MGC).</title>
        <authorList>
            <consortium name="The MGC Project Team"/>
        </authorList>
    </citation>
    <scope>NUCLEOTIDE SEQUENCE [LARGE SCALE MRNA] (ISOFORMS 1 AND 4)</scope>
    <source>
        <tissue>Pancreas</tissue>
        <tissue>Skin</tissue>
    </source>
</reference>
<reference key="9">
    <citation type="journal article" date="2006" name="Scand. J. Immunol.">
        <title>Detection of autoantibodies to the BTB-kelch protein KLHL7 in cancer sera.</title>
        <authorList>
            <person name="Bredholt G."/>
            <person name="Storstein A."/>
            <person name="Haugen M."/>
            <person name="Krossnes B.K."/>
            <person name="Husebye E."/>
            <person name="Knappskog P."/>
            <person name="Vedeler C.A."/>
        </authorList>
    </citation>
    <scope>SUBCELLULAR LOCATION</scope>
    <scope>TISSUE SPECIFICITY</scope>
</reference>
<reference key="10">
    <citation type="journal article" date="2011" name="J. Biol. Chem.">
        <title>Ubiquitin ligase activity of Cul3-KLHL7 protein is attenuated by autosomal dominant retinitis pigmentosa causative mutation.</title>
        <authorList>
            <person name="Kigoshi Y."/>
            <person name="Tsuruta F."/>
            <person name="Chiba T."/>
        </authorList>
    </citation>
    <scope>FUNCTION</scope>
    <scope>IDENTIFICATION IN THE BCR(KLHL7) COMPLEX</scope>
    <scope>HOMODIMERIZATION</scope>
    <scope>CHARACTERIZATION OF VARIANTS RP42 THR-153 AND VAL-153</scope>
</reference>
<reference key="11">
    <citation type="submission" date="2009-08" db="PDB data bank">
        <title>Crystal structure of the KELCH domain of human KLHL7.</title>
        <authorList>
            <consortium name="Structural genomics consortium (SGC)"/>
        </authorList>
    </citation>
    <scope>X-RAY CRYSTALLOGRAPHY (1.63 ANGSTROMS) OF 283-586</scope>
</reference>
<reference key="12">
    <citation type="journal article" date="2009" name="Am. J. Hum. Genet.">
        <title>Mutations in a BTB-Kelch protein, KLHL7, cause autosomal-dominant retinitis pigmentosa.</title>
        <authorList>
            <person name="Friedman J.S."/>
            <person name="Ray J.W."/>
            <person name="Waseem N."/>
            <person name="Johnson K."/>
            <person name="Brooks M.J."/>
            <person name="Hugosson T."/>
            <person name="Breuer D."/>
            <person name="Branham K.E."/>
            <person name="Krauth D.S."/>
            <person name="Bowne S.J."/>
            <person name="Sullivan L.S."/>
            <person name="Ponjavic V."/>
            <person name="Graense L."/>
            <person name="Khanna R."/>
            <person name="Trager E.H."/>
            <person name="Gieser L.M."/>
            <person name="Hughbanks-Wheaton D."/>
            <person name="Cojocaru R.I."/>
            <person name="Ghiasvand N.M."/>
            <person name="Chakarova C.F."/>
            <person name="Abrahamson M."/>
            <person name="Goering H.H.H."/>
            <person name="Webster A.R."/>
            <person name="Birch D.G."/>
            <person name="Abecasis G.R."/>
            <person name="Fann Y."/>
            <person name="Bhattacharya S.S."/>
            <person name="Daiger S.P."/>
            <person name="Heckenlively J.R."/>
            <person name="Andreasson S."/>
            <person name="Swaroop A."/>
        </authorList>
    </citation>
    <scope>VARIANTS RP42 ASN-150; THR-153 AND VAL-153</scope>
    <scope>VARIANTS ASN-255; TYR-423 AND GLN-472</scope>
    <scope>VARIANT ARG-18 (ISOFORM 2)</scope>
</reference>
<reference key="13">
    <citation type="journal article" date="2010" name="Arch. Ophthalmol.">
        <title>Phenotype associated with mutation in the recently identified autosomal dominant retinitis pigmentosa KLHL7 gene.</title>
        <authorList>
            <person name="Hugosson T."/>
            <person name="Friedman J.S."/>
            <person name="Ponjavic V."/>
            <person name="Abrahamson M."/>
            <person name="Swaroop A."/>
            <person name="Andreasson S."/>
        </authorList>
    </citation>
    <scope>VARIANT RP42 VAL-153</scope>
</reference>
<reference key="14">
    <citation type="journal article" date="2011" name="Arch. Ophthalmol.">
        <title>Phenotypic characterization of 3 families with autosomal dominant retinitis pigmentosa due to mutations in KLHL7.</title>
        <authorList>
            <person name="Wen Y."/>
            <person name="Locke K.G."/>
            <person name="Klein M."/>
            <person name="Bowne S.J."/>
            <person name="Sullivan L.S."/>
            <person name="Ray J.W."/>
            <person name="Daiger S.P."/>
            <person name="Birch D.G."/>
            <person name="Hughbanks-Wheaton D.K."/>
        </authorList>
    </citation>
    <scope>VARIANTS RP42 ASN-150; THR-153 AND VAL-153</scope>
</reference>
<reference key="15">
    <citation type="journal article" date="2016" name="Am. J. Hum. Genet.">
        <title>Bi-allelic mutations in KLHL7 cause a Crisponi/CISS1-like phenotype associated with early-onset retinitis pigmentosa.</title>
        <authorList>
            <person name="Angius A."/>
            <person name="Uva P."/>
            <person name="Buers I."/>
            <person name="Oppo M."/>
            <person name="Puddu A."/>
            <person name="Onano S."/>
            <person name="Persico I."/>
            <person name="Loi A."/>
            <person name="Marcia L."/>
            <person name="Hoehne W."/>
            <person name="Cuccuru G."/>
            <person name="Fotia G."/>
            <person name="Deiana M."/>
            <person name="Marongiu M."/>
            <person name="Atalay H.T."/>
            <person name="Inan S."/>
            <person name="El Assy O."/>
            <person name="Smit L.M."/>
            <person name="Okur I."/>
            <person name="Boduroglu K."/>
            <person name="Utine G.E."/>
            <person name="Kilic E."/>
            <person name="Zampino G."/>
            <person name="Crisponi G."/>
            <person name="Crisponi L."/>
            <person name="Rutsch F."/>
        </authorList>
    </citation>
    <scope>VARIANTS PERCHING GLN-372; CYS-420 AND SER-421</scope>
    <scope>CHARACTERIZATION OF VARIANTS PERCHING GLN-372; CYS-420 AND SER-421</scope>
    <scope>INVOLVEMENT IN PERCHING</scope>
    <scope>SUBCELLULAR LOCATION</scope>
</reference>
<accession>Q8IXQ5</accession>
<accession>A4D144</accession>
<accession>B7Z5I9</accession>
<accession>G5E9G3</accession>
<accession>Q7Z765</accession>
<accession>Q96MV2</accession>
<accession>Q9BQF8</accession>
<accession>Q9UDQ9</accession>
<sequence length="586" mass="65992">MAASGVEKSSKKKTEKKLAAREEAKLLAGFMGVMNNMRKQKTLCDVILMVQERKIPAHRVVLAAASHFFNLMFTTNMLESKSFEVELKDAEPDIIEQLVEFAYTARISVNSNNVQSLLDAANQYQIEPVKKMCVDFLKEQVDASNCLGISVLAECLDCPELKATADDFIHQHFTEVYKTDEFLQLDVKRVTHLLNQDTLTVRAEDQVYDAAVRWLKYDEPNRQPFMVDILAKVRFPLISKNFLSKTVQAEPLIQDNPECLKMVISGMRYHLLSPEDREELVDGTRPRRKKHDYRIALFGGSQPQSCRYFNPKDYSWTDIRCPFEKRRDAACVFWDNVVYILGGSQLFPIKRMDCYNVVKDSWYSKLGPPTPRDSLAACAAEGKIYTSGGSEVGNSALYLFECYDTRTESWHTKPSMLTQRCSHGMVEANGLIYVCGGSLGNNVSGRVLNSCEVYDPATETWTELCPMIEARKNHGLVFVKDKIFAVGGQNGLGGLDNVEYYDIKLNEWKMVSPMPWKGVTVKCAAVGSIVYVLAGFQGVGRLGHILEYNTETDKWVANSKVRAFPVTSCLICVVDTCGANEETLET</sequence>
<protein>
    <recommendedName>
        <fullName>Kelch-like protein 7</fullName>
    </recommendedName>
</protein>
<keyword id="KW-0002">3D-structure</keyword>
<keyword id="KW-0025">Alternative splicing</keyword>
<keyword id="KW-0963">Cytoplasm</keyword>
<keyword id="KW-0225">Disease variant</keyword>
<keyword id="KW-0880">Kelch repeat</keyword>
<keyword id="KW-0539">Nucleus</keyword>
<keyword id="KW-1267">Proteomics identification</keyword>
<keyword id="KW-1185">Reference proteome</keyword>
<keyword id="KW-0677">Repeat</keyword>
<keyword id="KW-0682">Retinitis pigmentosa</keyword>
<keyword id="KW-0833">Ubl conjugation pathway</keyword>
<dbReference type="EMBL" id="AF111113">
    <property type="protein sequence ID" value="AAF27196.1"/>
    <property type="molecule type" value="mRNA"/>
</dbReference>
<dbReference type="EMBL" id="AL136597">
    <property type="protein sequence ID" value="CAB66532.1"/>
    <property type="molecule type" value="mRNA"/>
</dbReference>
<dbReference type="EMBL" id="AK056390">
    <property type="protein sequence ID" value="BAB71175.1"/>
    <property type="molecule type" value="mRNA"/>
</dbReference>
<dbReference type="EMBL" id="AK299006">
    <property type="protein sequence ID" value="BAH12925.1"/>
    <property type="molecule type" value="mRNA"/>
</dbReference>
<dbReference type="EMBL" id="EF560731">
    <property type="protein sequence ID" value="ABQ59041.1"/>
    <property type="molecule type" value="mRNA"/>
</dbReference>
<dbReference type="EMBL" id="AC005082">
    <property type="status" value="NOT_ANNOTATED_CDS"/>
    <property type="molecule type" value="Genomic_DNA"/>
</dbReference>
<dbReference type="EMBL" id="AC006039">
    <property type="protein sequence ID" value="AAO21916.1"/>
    <property type="molecule type" value="Genomic_DNA"/>
</dbReference>
<dbReference type="EMBL" id="AC073992">
    <property type="status" value="NOT_ANNOTATED_CDS"/>
    <property type="molecule type" value="Genomic_DNA"/>
</dbReference>
<dbReference type="EMBL" id="CH236948">
    <property type="protein sequence ID" value="EAL24261.1"/>
    <property type="molecule type" value="Genomic_DNA"/>
</dbReference>
<dbReference type="EMBL" id="CH471073">
    <property type="protein sequence ID" value="EAW93770.1"/>
    <property type="molecule type" value="Genomic_DNA"/>
</dbReference>
<dbReference type="EMBL" id="CH471073">
    <property type="protein sequence ID" value="EAW93773.1"/>
    <property type="molecule type" value="Genomic_DNA"/>
</dbReference>
<dbReference type="EMBL" id="CH471073">
    <property type="protein sequence ID" value="EAW93774.1"/>
    <property type="molecule type" value="Genomic_DNA"/>
</dbReference>
<dbReference type="EMBL" id="BC009555">
    <property type="protein sequence ID" value="AAH09555.1"/>
    <property type="molecule type" value="mRNA"/>
</dbReference>
<dbReference type="EMBL" id="BC039585">
    <property type="protein sequence ID" value="AAH39585.1"/>
    <property type="molecule type" value="mRNA"/>
</dbReference>
<dbReference type="CCDS" id="CCDS34609.1">
    <molecule id="Q8IXQ5-1"/>
</dbReference>
<dbReference type="CCDS" id="CCDS5378.2">
    <molecule id="Q8IXQ5-5"/>
</dbReference>
<dbReference type="CCDS" id="CCDS55095.1">
    <molecule id="Q8IXQ5-3"/>
</dbReference>
<dbReference type="RefSeq" id="NP_001026880.2">
    <molecule id="Q8IXQ5-1"/>
    <property type="nucleotide sequence ID" value="NM_001031710.3"/>
</dbReference>
<dbReference type="RefSeq" id="NP_001165899.1">
    <molecule id="Q8IXQ5-3"/>
    <property type="nucleotide sequence ID" value="NM_001172428.2"/>
</dbReference>
<dbReference type="RefSeq" id="NP_061334.4">
    <molecule id="Q8IXQ5-5"/>
    <property type="nucleotide sequence ID" value="NM_018846.4"/>
</dbReference>
<dbReference type="RefSeq" id="XP_016867928.1">
    <property type="nucleotide sequence ID" value="XM_017012439.1"/>
</dbReference>
<dbReference type="PDB" id="3II7">
    <property type="method" value="X-ray"/>
    <property type="resolution" value="1.63 A"/>
    <property type="chains" value="A=283-586"/>
</dbReference>
<dbReference type="PDBsum" id="3II7"/>
<dbReference type="SMR" id="Q8IXQ5"/>
<dbReference type="BioGRID" id="121021">
    <property type="interactions" value="55"/>
</dbReference>
<dbReference type="ComplexPortal" id="CPX-8084">
    <property type="entry name" value="CRL3 E3 ubiquitin ligase complex, KLHL7 variant"/>
</dbReference>
<dbReference type="CORUM" id="Q8IXQ5"/>
<dbReference type="FunCoup" id="Q8IXQ5">
    <property type="interactions" value="1396"/>
</dbReference>
<dbReference type="IntAct" id="Q8IXQ5">
    <property type="interactions" value="47"/>
</dbReference>
<dbReference type="MINT" id="Q8IXQ5"/>
<dbReference type="STRING" id="9606.ENSP00000343273"/>
<dbReference type="GlyGen" id="Q8IXQ5">
    <property type="glycosylation" value="1 site, 1 O-linked glycan (1 site)"/>
</dbReference>
<dbReference type="iPTMnet" id="Q8IXQ5"/>
<dbReference type="PhosphoSitePlus" id="Q8IXQ5"/>
<dbReference type="BioMuta" id="KLHL7"/>
<dbReference type="DMDM" id="116242609"/>
<dbReference type="jPOST" id="Q8IXQ5"/>
<dbReference type="MassIVE" id="Q8IXQ5"/>
<dbReference type="PaxDb" id="9606-ENSP00000343273"/>
<dbReference type="PeptideAtlas" id="Q8IXQ5"/>
<dbReference type="ProteomicsDB" id="33929"/>
<dbReference type="ProteomicsDB" id="71041">
    <molecule id="Q8IXQ5-1"/>
</dbReference>
<dbReference type="ProteomicsDB" id="71042">
    <molecule id="Q8IXQ5-2"/>
</dbReference>
<dbReference type="ProteomicsDB" id="71043">
    <molecule id="Q8IXQ5-3"/>
</dbReference>
<dbReference type="ProteomicsDB" id="71044">
    <molecule id="Q8IXQ5-4"/>
</dbReference>
<dbReference type="Pumba" id="Q8IXQ5"/>
<dbReference type="Antibodypedia" id="25599">
    <property type="antibodies" value="98 antibodies from 19 providers"/>
</dbReference>
<dbReference type="DNASU" id="55975"/>
<dbReference type="Ensembl" id="ENST00000322275.9">
    <molecule id="Q8IXQ5-3"/>
    <property type="protein sequence ID" value="ENSP00000323270.5"/>
    <property type="gene ID" value="ENSG00000122550.18"/>
</dbReference>
<dbReference type="Ensembl" id="ENST00000339077.10">
    <molecule id="Q8IXQ5-1"/>
    <property type="protein sequence ID" value="ENSP00000343273.4"/>
    <property type="gene ID" value="ENSG00000122550.18"/>
</dbReference>
<dbReference type="Ensembl" id="ENST00000409689.5">
    <molecule id="Q8IXQ5-5"/>
    <property type="protein sequence ID" value="ENSP00000386263.1"/>
    <property type="gene ID" value="ENSG00000122550.18"/>
</dbReference>
<dbReference type="Ensembl" id="ENST00000410047.1">
    <molecule id="Q8IXQ5-4"/>
    <property type="protein sequence ID" value="ENSP00000386999.1"/>
    <property type="gene ID" value="ENSG00000122550.18"/>
</dbReference>
<dbReference type="GeneID" id="55975"/>
<dbReference type="KEGG" id="hsa:55975"/>
<dbReference type="MANE-Select" id="ENST00000339077.10">
    <property type="protein sequence ID" value="ENSP00000343273.4"/>
    <property type="RefSeq nucleotide sequence ID" value="NM_001031710.3"/>
    <property type="RefSeq protein sequence ID" value="NP_001026880.2"/>
</dbReference>
<dbReference type="UCSC" id="uc003svq.4">
    <molecule id="Q8IXQ5-1"/>
    <property type="organism name" value="human"/>
</dbReference>
<dbReference type="AGR" id="HGNC:15646"/>
<dbReference type="CTD" id="55975"/>
<dbReference type="DisGeNET" id="55975"/>
<dbReference type="GeneCards" id="KLHL7"/>
<dbReference type="GeneReviews" id="KLHL7"/>
<dbReference type="HGNC" id="HGNC:15646">
    <property type="gene designation" value="KLHL7"/>
</dbReference>
<dbReference type="HPA" id="ENSG00000122550">
    <property type="expression patterns" value="Tissue enhanced (heart)"/>
</dbReference>
<dbReference type="MalaCards" id="KLHL7"/>
<dbReference type="MIM" id="611119">
    <property type="type" value="gene"/>
</dbReference>
<dbReference type="MIM" id="612943">
    <property type="type" value="phenotype"/>
</dbReference>
<dbReference type="MIM" id="617055">
    <property type="type" value="phenotype"/>
</dbReference>
<dbReference type="neXtProt" id="NX_Q8IXQ5"/>
<dbReference type="OpenTargets" id="ENSG00000122550"/>
<dbReference type="Orphanet" id="157820">
    <property type="disease" value="Cold-induced sweating syndrome"/>
</dbReference>
<dbReference type="Orphanet" id="603684">
    <property type="disease" value="KLHL7-related Bohring-Opitz-like and Crisponi/Cold-induced sweating-like overlap syndrome"/>
</dbReference>
<dbReference type="Orphanet" id="603689">
    <property type="disease" value="KLHL7-related Bohring-Opitz-like syndrome"/>
</dbReference>
<dbReference type="Orphanet" id="603694">
    <property type="disease" value="KLHL7-related Crisponi/cold-induced sweating-like syndrome"/>
</dbReference>
<dbReference type="Orphanet" id="791">
    <property type="disease" value="Retinitis pigmentosa"/>
</dbReference>
<dbReference type="PharmGKB" id="PA38392"/>
<dbReference type="VEuPathDB" id="HostDB:ENSG00000122550"/>
<dbReference type="eggNOG" id="KOG4441">
    <property type="taxonomic scope" value="Eukaryota"/>
</dbReference>
<dbReference type="GeneTree" id="ENSGT00940000155602"/>
<dbReference type="HOGENOM" id="CLU_004253_14_2_1"/>
<dbReference type="InParanoid" id="Q8IXQ5"/>
<dbReference type="OMA" id="WRAASPM"/>
<dbReference type="OrthoDB" id="19132at2759"/>
<dbReference type="PAN-GO" id="Q8IXQ5">
    <property type="GO annotations" value="0 GO annotations based on evolutionary models"/>
</dbReference>
<dbReference type="PhylomeDB" id="Q8IXQ5"/>
<dbReference type="TreeFam" id="TF351653"/>
<dbReference type="PathwayCommons" id="Q8IXQ5"/>
<dbReference type="SignaLink" id="Q8IXQ5"/>
<dbReference type="SIGNOR" id="Q8IXQ5"/>
<dbReference type="UniPathway" id="UPA00143"/>
<dbReference type="BioGRID-ORCS" id="55975">
    <property type="hits" value="29 hits in 1203 CRISPR screens"/>
</dbReference>
<dbReference type="ChiTaRS" id="KLHL7">
    <property type="organism name" value="human"/>
</dbReference>
<dbReference type="EvolutionaryTrace" id="Q8IXQ5"/>
<dbReference type="GeneWiki" id="KLHL7"/>
<dbReference type="GenomeRNAi" id="55975"/>
<dbReference type="Pharos" id="Q8IXQ5">
    <property type="development level" value="Tbio"/>
</dbReference>
<dbReference type="PRO" id="PR:Q8IXQ5"/>
<dbReference type="Proteomes" id="UP000005640">
    <property type="component" value="Chromosome 7"/>
</dbReference>
<dbReference type="RNAct" id="Q8IXQ5">
    <property type="molecule type" value="protein"/>
</dbReference>
<dbReference type="Bgee" id="ENSG00000122550">
    <property type="expression patterns" value="Expressed in oocyte and 193 other cell types or tissues"/>
</dbReference>
<dbReference type="ExpressionAtlas" id="Q8IXQ5">
    <property type="expression patterns" value="baseline and differential"/>
</dbReference>
<dbReference type="GO" id="GO:0031463">
    <property type="term" value="C:Cul3-RING ubiquitin ligase complex"/>
    <property type="evidence" value="ECO:0000314"/>
    <property type="project" value="UniProtKB"/>
</dbReference>
<dbReference type="GO" id="GO:0005737">
    <property type="term" value="C:cytoplasm"/>
    <property type="evidence" value="ECO:0000318"/>
    <property type="project" value="GO_Central"/>
</dbReference>
<dbReference type="GO" id="GO:0005829">
    <property type="term" value="C:cytosol"/>
    <property type="evidence" value="ECO:0000314"/>
    <property type="project" value="HPA"/>
</dbReference>
<dbReference type="GO" id="GO:0005730">
    <property type="term" value="C:nucleolus"/>
    <property type="evidence" value="ECO:0000314"/>
    <property type="project" value="LIFEdb"/>
</dbReference>
<dbReference type="GO" id="GO:0005654">
    <property type="term" value="C:nucleoplasm"/>
    <property type="evidence" value="ECO:0000314"/>
    <property type="project" value="HPA"/>
</dbReference>
<dbReference type="GO" id="GO:0048471">
    <property type="term" value="C:perinuclear region of cytoplasm"/>
    <property type="evidence" value="ECO:0000314"/>
    <property type="project" value="UniProtKB"/>
</dbReference>
<dbReference type="GO" id="GO:0005886">
    <property type="term" value="C:plasma membrane"/>
    <property type="evidence" value="ECO:0000314"/>
    <property type="project" value="HPA"/>
</dbReference>
<dbReference type="GO" id="GO:0042802">
    <property type="term" value="F:identical protein binding"/>
    <property type="evidence" value="ECO:0000353"/>
    <property type="project" value="IntAct"/>
</dbReference>
<dbReference type="GO" id="GO:0042803">
    <property type="term" value="F:protein homodimerization activity"/>
    <property type="evidence" value="ECO:0000314"/>
    <property type="project" value="UniProtKB"/>
</dbReference>
<dbReference type="GO" id="GO:1990756">
    <property type="term" value="F:ubiquitin-like ligase-substrate adaptor activity"/>
    <property type="evidence" value="ECO:0000318"/>
    <property type="project" value="GO_Central"/>
</dbReference>
<dbReference type="GO" id="GO:0043161">
    <property type="term" value="P:proteasome-mediated ubiquitin-dependent protein catabolic process"/>
    <property type="evidence" value="ECO:0000318"/>
    <property type="project" value="GO_Central"/>
</dbReference>
<dbReference type="GO" id="GO:0016567">
    <property type="term" value="P:protein ubiquitination"/>
    <property type="evidence" value="ECO:0000314"/>
    <property type="project" value="UniProtKB"/>
</dbReference>
<dbReference type="CDD" id="cd18447">
    <property type="entry name" value="BACK_KLHL7"/>
    <property type="match status" value="1"/>
</dbReference>
<dbReference type="CDD" id="cd18237">
    <property type="entry name" value="BTB_POZ_KLHL7"/>
    <property type="match status" value="1"/>
</dbReference>
<dbReference type="FunFam" id="1.25.40.420:FF:000007">
    <property type="entry name" value="Kelch-like family member 7"/>
    <property type="match status" value="1"/>
</dbReference>
<dbReference type="FunFam" id="2.120.10.80:FF:000013">
    <property type="entry name" value="Kelch-like family member 7"/>
    <property type="match status" value="1"/>
</dbReference>
<dbReference type="FunFam" id="3.30.710.10:FF:000080">
    <property type="entry name" value="kelch-like protein 7 isoform X1"/>
    <property type="match status" value="1"/>
</dbReference>
<dbReference type="Gene3D" id="1.25.40.420">
    <property type="match status" value="1"/>
</dbReference>
<dbReference type="Gene3D" id="2.120.10.80">
    <property type="entry name" value="Kelch-type beta propeller"/>
    <property type="match status" value="1"/>
</dbReference>
<dbReference type="Gene3D" id="3.30.710.10">
    <property type="entry name" value="Potassium Channel Kv1.1, Chain A"/>
    <property type="match status" value="1"/>
</dbReference>
<dbReference type="InterPro" id="IPR011705">
    <property type="entry name" value="BACK"/>
</dbReference>
<dbReference type="InterPro" id="IPR017096">
    <property type="entry name" value="BTB-kelch_protein"/>
</dbReference>
<dbReference type="InterPro" id="IPR000210">
    <property type="entry name" value="BTB/POZ_dom"/>
</dbReference>
<dbReference type="InterPro" id="IPR030599">
    <property type="entry name" value="BTB/POZ_KLHL7"/>
</dbReference>
<dbReference type="InterPro" id="IPR015915">
    <property type="entry name" value="Kelch-typ_b-propeller"/>
</dbReference>
<dbReference type="InterPro" id="IPR006652">
    <property type="entry name" value="Kelch_1"/>
</dbReference>
<dbReference type="InterPro" id="IPR047060">
    <property type="entry name" value="KLHL7_BACK"/>
</dbReference>
<dbReference type="InterPro" id="IPR011333">
    <property type="entry name" value="SKP1/BTB/POZ_sf"/>
</dbReference>
<dbReference type="PANTHER" id="PTHR24412">
    <property type="entry name" value="KELCH PROTEIN"/>
    <property type="match status" value="1"/>
</dbReference>
<dbReference type="PANTHER" id="PTHR24412:SF435">
    <property type="entry name" value="KELCH-LIKE PROTEIN 7"/>
    <property type="match status" value="1"/>
</dbReference>
<dbReference type="Pfam" id="PF07707">
    <property type="entry name" value="BACK"/>
    <property type="match status" value="1"/>
</dbReference>
<dbReference type="Pfam" id="PF00651">
    <property type="entry name" value="BTB"/>
    <property type="match status" value="1"/>
</dbReference>
<dbReference type="Pfam" id="PF24681">
    <property type="entry name" value="Kelch_KLHDC2_KLHL20_DRC7"/>
    <property type="match status" value="1"/>
</dbReference>
<dbReference type="PIRSF" id="PIRSF037037">
    <property type="entry name" value="Kelch-like_protein_gigaxonin"/>
    <property type="match status" value="1"/>
</dbReference>
<dbReference type="SMART" id="SM00875">
    <property type="entry name" value="BACK"/>
    <property type="match status" value="1"/>
</dbReference>
<dbReference type="SMART" id="SM00225">
    <property type="entry name" value="BTB"/>
    <property type="match status" value="1"/>
</dbReference>
<dbReference type="SMART" id="SM00612">
    <property type="entry name" value="Kelch"/>
    <property type="match status" value="4"/>
</dbReference>
<dbReference type="SUPFAM" id="SSF117281">
    <property type="entry name" value="Kelch motif"/>
    <property type="match status" value="1"/>
</dbReference>
<dbReference type="SUPFAM" id="SSF54695">
    <property type="entry name" value="POZ domain"/>
    <property type="match status" value="1"/>
</dbReference>
<dbReference type="PROSITE" id="PS50097">
    <property type="entry name" value="BTB"/>
    <property type="match status" value="1"/>
</dbReference>
<gene>
    <name type="primary">KLHL7</name>
</gene>